<organism>
    <name type="scientific">Arabidopsis thaliana</name>
    <name type="common">Mouse-ear cress</name>
    <dbReference type="NCBI Taxonomy" id="3702"/>
    <lineage>
        <taxon>Eukaryota</taxon>
        <taxon>Viridiplantae</taxon>
        <taxon>Streptophyta</taxon>
        <taxon>Embryophyta</taxon>
        <taxon>Tracheophyta</taxon>
        <taxon>Spermatophyta</taxon>
        <taxon>Magnoliopsida</taxon>
        <taxon>eudicotyledons</taxon>
        <taxon>Gunneridae</taxon>
        <taxon>Pentapetalae</taxon>
        <taxon>rosids</taxon>
        <taxon>malvids</taxon>
        <taxon>Brassicales</taxon>
        <taxon>Brassicaceae</taxon>
        <taxon>Camelineae</taxon>
        <taxon>Arabidopsis</taxon>
    </lineage>
</organism>
<proteinExistence type="predicted"/>
<comment type="subcellular location">
    <subcellularLocation>
        <location evidence="1">Mitochondrion</location>
    </subcellularLocation>
</comment>
<comment type="miscellaneous">
    <text>A stretch of 270 kb of the mitochondrial genome is duplicated within the centromere of chromosome 2 resulting in the duplication of the gene. The expression of the duplicated gene (At2g07686) is not demonstrated.</text>
</comment>
<sequence length="100" mass="12003">MLHISQEFLLPISMEHWRLLITSQVIKKIGIPWKVIFHAFQNHNRGILFLQIFEHIIDFLFGEAIIYRYVLLDPKSRQVIRDSILNSFLVLYNQIKLLEK</sequence>
<name>M740_ARATH</name>
<accession>P92515</accession>
<accession>Q1ZXZ8</accession>
<reference key="1">
    <citation type="journal article" date="1997" name="Nat. Genet.">
        <title>The mitochondrial genome of Arabidopsis thaliana contains 57 genes in 366,924 nucleotides.</title>
        <authorList>
            <person name="Unseld M."/>
            <person name="Marienfeld J.R."/>
            <person name="Brandt P."/>
            <person name="Brennicke A."/>
        </authorList>
    </citation>
    <scope>NUCLEOTIDE SEQUENCE [LARGE SCALE GENOMIC DNA]</scope>
    <source>
        <strain>cv. C24</strain>
    </source>
</reference>
<reference key="2">
    <citation type="journal article" date="2018" name="Plant Cell">
        <title>Correction of persistent errors in Arabidopsis reference mitochondrial genomes.</title>
        <authorList>
            <person name="Sloan D.B."/>
            <person name="Wu Z."/>
            <person name="Sharbrough J."/>
        </authorList>
    </citation>
    <scope>NUCLEOTIDE SEQUENCE [LARGE SCALE GENOMIC DNA]</scope>
    <source>
        <strain>cv. Columbia</strain>
    </source>
</reference>
<reference key="3">
    <citation type="journal article" date="1999" name="Nature">
        <title>Sequence and analysis of chromosome 2 of the plant Arabidopsis thaliana.</title>
        <authorList>
            <person name="Lin X."/>
            <person name="Kaul S."/>
            <person name="Rounsley S.D."/>
            <person name="Shea T.P."/>
            <person name="Benito M.-I."/>
            <person name="Town C.D."/>
            <person name="Fujii C.Y."/>
            <person name="Mason T.M."/>
            <person name="Bowman C.L."/>
            <person name="Barnstead M.E."/>
            <person name="Feldblyum T.V."/>
            <person name="Buell C.R."/>
            <person name="Ketchum K.A."/>
            <person name="Lee J.J."/>
            <person name="Ronning C.M."/>
            <person name="Koo H.L."/>
            <person name="Moffat K.S."/>
            <person name="Cronin L.A."/>
            <person name="Shen M."/>
            <person name="Pai G."/>
            <person name="Van Aken S."/>
            <person name="Umayam L."/>
            <person name="Tallon L.J."/>
            <person name="Gill J.E."/>
            <person name="Adams M.D."/>
            <person name="Carrera A.J."/>
            <person name="Creasy T.H."/>
            <person name="Goodman H.M."/>
            <person name="Somerville C.R."/>
            <person name="Copenhaver G.P."/>
            <person name="Preuss D."/>
            <person name="Nierman W.C."/>
            <person name="White O."/>
            <person name="Eisen J.A."/>
            <person name="Salzberg S.L."/>
            <person name="Fraser C.M."/>
            <person name="Venter J.C."/>
        </authorList>
    </citation>
    <scope>NUCLEOTIDE SEQUENCE [LARGE SCALE GENOMIC DNA] (AT2G07686)</scope>
    <source>
        <strain>cv. Columbia</strain>
    </source>
</reference>
<reference key="4">
    <citation type="journal article" date="2017" name="Plant J.">
        <title>Araport11: a complete reannotation of the Arabidopsis thaliana reference genome.</title>
        <authorList>
            <person name="Cheng C.Y."/>
            <person name="Krishnakumar V."/>
            <person name="Chan A.P."/>
            <person name="Thibaud-Nissen F."/>
            <person name="Schobel S."/>
            <person name="Town C.D."/>
        </authorList>
    </citation>
    <scope>GENOME REANNOTATION (AT2G07686)</scope>
    <source>
        <strain>cv. Columbia</strain>
    </source>
</reference>
<feature type="chain" id="PRO_0000196788" description="Uncharacterized mitochondrial protein AtMg00740">
    <location>
        <begin position="1"/>
        <end position="100"/>
    </location>
</feature>
<geneLocation type="mitochondrion"/>
<evidence type="ECO:0000305" key="1"/>
<evidence type="ECO:0000312" key="2">
    <source>
        <dbReference type="Araport" id="AT2G07686"/>
    </source>
</evidence>
<evidence type="ECO:0000312" key="3">
    <source>
        <dbReference type="Araport" id="ATMG00740"/>
    </source>
</evidence>
<gene>
    <name evidence="3" type="ordered locus">AtMg00740</name>
</gene>
<gene>
    <name evidence="2" type="ordered locus">At2g07686</name>
</gene>
<dbReference type="EMBL" id="Y08501">
    <property type="protein sequence ID" value="CAA69819.1"/>
    <property type="molecule type" value="Genomic_DNA"/>
</dbReference>
<dbReference type="EMBL" id="BK010421">
    <property type="status" value="NOT_ANNOTATED_CDS"/>
    <property type="molecule type" value="Genomic_DNA"/>
</dbReference>
<dbReference type="EMBL" id="AC007143">
    <property type="status" value="NOT_ANNOTATED_CDS"/>
    <property type="molecule type" value="Genomic_DNA"/>
</dbReference>
<dbReference type="EMBL" id="CP002685">
    <property type="status" value="NOT_ANNOTATED_CDS"/>
    <property type="molecule type" value="Genomic_DNA"/>
</dbReference>
<dbReference type="RefSeq" id="NP_085533.1">
    <property type="nucleotide sequence ID" value="NC_001284.2"/>
</dbReference>
<dbReference type="STRING" id="3702.P92515"/>
<dbReference type="PaxDb" id="3702-ATMG00740.1"/>
<dbReference type="EnsemblPlants" id="ATMG00740.1">
    <property type="protein sequence ID" value="ATMG00740.1"/>
    <property type="gene ID" value="ATMG00740"/>
</dbReference>
<dbReference type="Gramene" id="ATMG00740.1">
    <property type="protein sequence ID" value="ATMG00740.1"/>
    <property type="gene ID" value="ATMG00740"/>
</dbReference>
<dbReference type="Araport" id="AT2G07686"/>
<dbReference type="Araport" id="ATMG00740"/>
<dbReference type="TAIR" id="AT2G07686"/>
<dbReference type="TAIR" id="ATMG00740">
    <property type="gene designation" value="ORF100A"/>
</dbReference>
<dbReference type="HOGENOM" id="CLU_2309942_0_0_1"/>
<dbReference type="InParanoid" id="P92515"/>
<dbReference type="Proteomes" id="UP000006548">
    <property type="component" value="Chromosome 2"/>
</dbReference>
<dbReference type="Proteomes" id="UP000006548">
    <property type="component" value="Mitochondrion MT"/>
</dbReference>
<dbReference type="GO" id="GO:0005739">
    <property type="term" value="C:mitochondrion"/>
    <property type="evidence" value="ECO:0007669"/>
    <property type="project" value="UniProtKB-SubCell"/>
</dbReference>
<keyword id="KW-0496">Mitochondrion</keyword>
<keyword id="KW-1185">Reference proteome</keyword>
<protein>
    <recommendedName>
        <fullName>Uncharacterized mitochondrial protein AtMg00740</fullName>
    </recommendedName>
    <alternativeName>
        <fullName>ORF100a</fullName>
    </alternativeName>
</protein>